<sequence>MPWSPGSSSAPSGDKDDIKSKLSSWTKPIRDHLSEGGNWIAPIIAAGATMGFWSFYKTYLRRIPNSAHVSPRYFHRRSLFGKVTSVGDGDGFHLYHTPGGRLAGWGWLRTVPKLKKELKGQTIPIRIAGVDAPEGGHFGRTAQPFAAEAQKFLDSHILNRRVRAYVWRRDQYDRIVATVYVRRPPFFQRKDVSMELLKQGFATTYEAKTGAEFGGPSKEIEYKVAEEVARQKGKGMWSLEKGGGFFHPSKKARAIESPMAYKRRVKLAEEPQRKLDS</sequence>
<evidence type="ECO:0000250" key="1"/>
<evidence type="ECO:0000255" key="2"/>
<evidence type="ECO:0000255" key="3">
    <source>
        <dbReference type="PROSITE-ProRule" id="PRU00272"/>
    </source>
</evidence>
<evidence type="ECO:0000305" key="4"/>
<keyword id="KW-0106">Calcium</keyword>
<keyword id="KW-0255">Endonuclease</keyword>
<keyword id="KW-0378">Hydrolase</keyword>
<keyword id="KW-0472">Membrane</keyword>
<keyword id="KW-0479">Metal-binding</keyword>
<keyword id="KW-0496">Mitochondrion</keyword>
<keyword id="KW-0540">Nuclease</keyword>
<keyword id="KW-1185">Reference proteome</keyword>
<keyword id="KW-0812">Transmembrane</keyword>
<keyword id="KW-1133">Transmembrane helix</keyword>
<name>LCL3_PODAN</name>
<feature type="chain" id="PRO_0000408679" description="Probable endonuclease LCL3">
    <location>
        <begin position="1"/>
        <end position="277"/>
    </location>
</feature>
<feature type="transmembrane region" description="Helical" evidence="2">
    <location>
        <begin position="39"/>
        <end position="56"/>
    </location>
</feature>
<feature type="domain" description="TNase-like" evidence="3">
    <location>
        <begin position="77"/>
        <end position="239"/>
    </location>
</feature>
<feature type="active site" evidence="3">
    <location>
        <position position="126"/>
    </location>
</feature>
<feature type="active site" evidence="3">
    <location>
        <position position="134"/>
    </location>
</feature>
<feature type="active site" evidence="3">
    <location>
        <position position="174"/>
    </location>
</feature>
<feature type="binding site" evidence="3">
    <location>
        <position position="131"/>
    </location>
    <ligand>
        <name>Ca(2+)</name>
        <dbReference type="ChEBI" id="CHEBI:29108"/>
    </ligand>
</feature>
<protein>
    <recommendedName>
        <fullName>Probable endonuclease LCL3</fullName>
        <ecNumber>3.1.-.-</ecNumber>
    </recommendedName>
</protein>
<organism>
    <name type="scientific">Podospora anserina (strain S / ATCC MYA-4624 / DSM 980 / FGSC 10383)</name>
    <name type="common">Pleurage anserina</name>
    <dbReference type="NCBI Taxonomy" id="515849"/>
    <lineage>
        <taxon>Eukaryota</taxon>
        <taxon>Fungi</taxon>
        <taxon>Dikarya</taxon>
        <taxon>Ascomycota</taxon>
        <taxon>Pezizomycotina</taxon>
        <taxon>Sordariomycetes</taxon>
        <taxon>Sordariomycetidae</taxon>
        <taxon>Sordariales</taxon>
        <taxon>Podosporaceae</taxon>
        <taxon>Podospora</taxon>
        <taxon>Podospora anserina</taxon>
    </lineage>
</organism>
<dbReference type="EC" id="3.1.-.-"/>
<dbReference type="EMBL" id="CU633899">
    <property type="protein sequence ID" value="CAP67898.1"/>
    <property type="molecule type" value="Genomic_DNA"/>
</dbReference>
<dbReference type="EMBL" id="FO904936">
    <property type="protein sequence ID" value="CDP24157.1"/>
    <property type="molecule type" value="Genomic_DNA"/>
</dbReference>
<dbReference type="RefSeq" id="XP_001907227.1">
    <property type="nucleotide sequence ID" value="XM_001907192.1"/>
</dbReference>
<dbReference type="SMR" id="B2AU25"/>
<dbReference type="FunCoup" id="B2AU25">
    <property type="interactions" value="13"/>
</dbReference>
<dbReference type="STRING" id="515849.B2AU25"/>
<dbReference type="GeneID" id="6191430"/>
<dbReference type="KEGG" id="pan:PODANSg4260"/>
<dbReference type="VEuPathDB" id="FungiDB:PODANS_1_17740"/>
<dbReference type="eggNOG" id="ENOG502S1U4">
    <property type="taxonomic scope" value="Eukaryota"/>
</dbReference>
<dbReference type="HOGENOM" id="CLU_046484_0_1_1"/>
<dbReference type="InParanoid" id="B2AU25"/>
<dbReference type="OrthoDB" id="430293at2759"/>
<dbReference type="Proteomes" id="UP000001197">
    <property type="component" value="Chromosome 1"/>
</dbReference>
<dbReference type="GO" id="GO:0016020">
    <property type="term" value="C:membrane"/>
    <property type="evidence" value="ECO:0007669"/>
    <property type="project" value="UniProtKB-SubCell"/>
</dbReference>
<dbReference type="GO" id="GO:0005739">
    <property type="term" value="C:mitochondrion"/>
    <property type="evidence" value="ECO:0007669"/>
    <property type="project" value="UniProtKB-SubCell"/>
</dbReference>
<dbReference type="GO" id="GO:0004519">
    <property type="term" value="F:endonuclease activity"/>
    <property type="evidence" value="ECO:0007669"/>
    <property type="project" value="UniProtKB-KW"/>
</dbReference>
<dbReference type="GO" id="GO:0046872">
    <property type="term" value="F:metal ion binding"/>
    <property type="evidence" value="ECO:0007669"/>
    <property type="project" value="UniProtKB-KW"/>
</dbReference>
<dbReference type="FunFam" id="2.40.50.90:FF:000029">
    <property type="entry name" value="Probable endonuclease lcl3"/>
    <property type="match status" value="1"/>
</dbReference>
<dbReference type="Gene3D" id="2.40.50.90">
    <property type="match status" value="1"/>
</dbReference>
<dbReference type="InterPro" id="IPR035437">
    <property type="entry name" value="SNase_OB-fold_sf"/>
</dbReference>
<dbReference type="InterPro" id="IPR016071">
    <property type="entry name" value="Staphylococal_nuclease_OB-fold"/>
</dbReference>
<dbReference type="PANTHER" id="PTHR12302">
    <property type="entry name" value="EBNA2 BINDING PROTEIN P100"/>
    <property type="match status" value="1"/>
</dbReference>
<dbReference type="PANTHER" id="PTHR12302:SF3">
    <property type="entry name" value="SERINE_THREONINE-PROTEIN KINASE 31"/>
    <property type="match status" value="1"/>
</dbReference>
<dbReference type="Pfam" id="PF00565">
    <property type="entry name" value="SNase"/>
    <property type="match status" value="1"/>
</dbReference>
<dbReference type="SMART" id="SM00318">
    <property type="entry name" value="SNc"/>
    <property type="match status" value="1"/>
</dbReference>
<dbReference type="SUPFAM" id="SSF50199">
    <property type="entry name" value="Staphylococcal nuclease"/>
    <property type="match status" value="1"/>
</dbReference>
<dbReference type="PROSITE" id="PS50830">
    <property type="entry name" value="TNASE_3"/>
    <property type="match status" value="1"/>
</dbReference>
<reference key="1">
    <citation type="journal article" date="2008" name="Genome Biol.">
        <title>The genome sequence of the model ascomycete fungus Podospora anserina.</title>
        <authorList>
            <person name="Espagne E."/>
            <person name="Lespinet O."/>
            <person name="Malagnac F."/>
            <person name="Da Silva C."/>
            <person name="Jaillon O."/>
            <person name="Porcel B.M."/>
            <person name="Couloux A."/>
            <person name="Aury J.-M."/>
            <person name="Segurens B."/>
            <person name="Poulain J."/>
            <person name="Anthouard V."/>
            <person name="Grossetete S."/>
            <person name="Khalili H."/>
            <person name="Coppin E."/>
            <person name="Dequard-Chablat M."/>
            <person name="Picard M."/>
            <person name="Contamine V."/>
            <person name="Arnaise S."/>
            <person name="Bourdais A."/>
            <person name="Berteaux-Lecellier V."/>
            <person name="Gautheret D."/>
            <person name="de Vries R.P."/>
            <person name="Battaglia E."/>
            <person name="Coutinho P.M."/>
            <person name="Danchin E.G.J."/>
            <person name="Henrissat B."/>
            <person name="El Khoury R."/>
            <person name="Sainsard-Chanet A."/>
            <person name="Boivin A."/>
            <person name="Pinan-Lucarre B."/>
            <person name="Sellem C.H."/>
            <person name="Debuchy R."/>
            <person name="Wincker P."/>
            <person name="Weissenbach J."/>
            <person name="Silar P."/>
        </authorList>
    </citation>
    <scope>NUCLEOTIDE SEQUENCE [LARGE SCALE GENOMIC DNA]</scope>
    <source>
        <strain>S / ATCC MYA-4624 / DSM 980 / FGSC 10383</strain>
    </source>
</reference>
<reference key="2">
    <citation type="journal article" date="2014" name="Genetics">
        <title>Maintaining two mating types: Structure of the mating type locus and its role in heterokaryosis in Podospora anserina.</title>
        <authorList>
            <person name="Grognet P."/>
            <person name="Bidard F."/>
            <person name="Kuchly C."/>
            <person name="Tong L.C.H."/>
            <person name="Coppin E."/>
            <person name="Benkhali J.A."/>
            <person name="Couloux A."/>
            <person name="Wincker P."/>
            <person name="Debuchy R."/>
            <person name="Silar P."/>
        </authorList>
    </citation>
    <scope>GENOME REANNOTATION</scope>
    <source>
        <strain>S / ATCC MYA-4624 / DSM 980 / FGSC 10383</strain>
    </source>
</reference>
<gene>
    <name type="primary">LCL3</name>
    <name type="ordered locus">Pa_1_17740</name>
    <name type="ORF">PODANS_1_17740</name>
</gene>
<accession>B2AU25</accession>
<accession>A0A090CFP3</accession>
<comment type="subcellular location">
    <subcellularLocation>
        <location>Mitochondrion</location>
    </subcellularLocation>
    <subcellularLocation>
        <location evidence="1">Membrane</location>
        <topology evidence="1">Single-pass membrane protein</topology>
    </subcellularLocation>
</comment>
<comment type="similarity">
    <text evidence="4">Belongs to the LCL3 family.</text>
</comment>
<proteinExistence type="inferred from homology"/>